<keyword id="KW-0067">ATP-binding</keyword>
<keyword id="KW-0963">Cytoplasm</keyword>
<keyword id="KW-0418">Kinase</keyword>
<keyword id="KW-0460">Magnesium</keyword>
<keyword id="KW-0479">Metal-binding</keyword>
<keyword id="KW-0546">Nucleotide metabolism</keyword>
<keyword id="KW-0547">Nucleotide-binding</keyword>
<keyword id="KW-0597">Phosphoprotein</keyword>
<keyword id="KW-1185">Reference proteome</keyword>
<keyword id="KW-0808">Transferase</keyword>
<feature type="chain" id="PRO_1000026302" description="Nucleoside diphosphate kinase">
    <location>
        <begin position="1"/>
        <end position="141"/>
    </location>
</feature>
<feature type="active site" description="Pros-phosphohistidine intermediate" evidence="1">
    <location>
        <position position="117"/>
    </location>
</feature>
<feature type="binding site" evidence="1">
    <location>
        <position position="11"/>
    </location>
    <ligand>
        <name>ATP</name>
        <dbReference type="ChEBI" id="CHEBI:30616"/>
    </ligand>
</feature>
<feature type="binding site" evidence="1">
    <location>
        <position position="59"/>
    </location>
    <ligand>
        <name>ATP</name>
        <dbReference type="ChEBI" id="CHEBI:30616"/>
    </ligand>
</feature>
<feature type="binding site" evidence="1">
    <location>
        <position position="87"/>
    </location>
    <ligand>
        <name>ATP</name>
        <dbReference type="ChEBI" id="CHEBI:30616"/>
    </ligand>
</feature>
<feature type="binding site" evidence="1">
    <location>
        <position position="93"/>
    </location>
    <ligand>
        <name>ATP</name>
        <dbReference type="ChEBI" id="CHEBI:30616"/>
    </ligand>
</feature>
<feature type="binding site" evidence="1">
    <location>
        <position position="104"/>
    </location>
    <ligand>
        <name>ATP</name>
        <dbReference type="ChEBI" id="CHEBI:30616"/>
    </ligand>
</feature>
<feature type="binding site" evidence="1">
    <location>
        <position position="114"/>
    </location>
    <ligand>
        <name>ATP</name>
        <dbReference type="ChEBI" id="CHEBI:30616"/>
    </ligand>
</feature>
<evidence type="ECO:0000255" key="1">
    <source>
        <dbReference type="HAMAP-Rule" id="MF_00451"/>
    </source>
</evidence>
<reference key="1">
    <citation type="journal article" date="2009" name="BMC Genomics">
        <title>The complete genome sequence of Staphylothermus marinus reveals differences in sulfur metabolism among heterotrophic Crenarchaeota.</title>
        <authorList>
            <person name="Anderson I.J."/>
            <person name="Dharmarajan L."/>
            <person name="Rodriguez J."/>
            <person name="Hooper S."/>
            <person name="Porat I."/>
            <person name="Ulrich L.E."/>
            <person name="Elkins J.G."/>
            <person name="Mavromatis K."/>
            <person name="Sun H."/>
            <person name="Land M."/>
            <person name="Lapidus A."/>
            <person name="Lucas S."/>
            <person name="Barry K."/>
            <person name="Huber H."/>
            <person name="Zhulin I.B."/>
            <person name="Whitman W.B."/>
            <person name="Mukhopadhyay B."/>
            <person name="Woese C."/>
            <person name="Bristow J."/>
            <person name="Kyrpides N."/>
        </authorList>
    </citation>
    <scope>NUCLEOTIDE SEQUENCE [LARGE SCALE GENOMIC DNA]</scope>
    <source>
        <strain>ATCC 43588 / DSM 3639 / JCM 9404 / F1</strain>
    </source>
</reference>
<reference key="2">
    <citation type="journal article" date="2009" name="Stand. Genomic Sci.">
        <title>Complete genome sequence of Staphylothermus marinus Stetter and Fiala 1986 type strain F1.</title>
        <authorList>
            <person name="Anderson I.J."/>
            <person name="Sun H."/>
            <person name="Lapidus A."/>
            <person name="Copeland A."/>
            <person name="Glavina Del Rio T."/>
            <person name="Tice H."/>
            <person name="Dalin E."/>
            <person name="Lucas S."/>
            <person name="Barry K."/>
            <person name="Land M."/>
            <person name="Richardson P."/>
            <person name="Huber H."/>
            <person name="Kyrpides N.C."/>
        </authorList>
    </citation>
    <scope>NUCLEOTIDE SEQUENCE [LARGE SCALE GENOMIC DNA]</scope>
    <source>
        <strain>ATCC 43588 / DSM 3639 / JCM 9404 / F1</strain>
    </source>
</reference>
<name>NDK_STAMF</name>
<accession>A3DMR9</accession>
<comment type="function">
    <text evidence="1">Major role in the synthesis of nucleoside triphosphates other than ATP. The ATP gamma phosphate is transferred to the NDP beta phosphate via a ping-pong mechanism, using a phosphorylated active-site intermediate.</text>
</comment>
<comment type="catalytic activity">
    <reaction evidence="1">
        <text>a 2'-deoxyribonucleoside 5'-diphosphate + ATP = a 2'-deoxyribonucleoside 5'-triphosphate + ADP</text>
        <dbReference type="Rhea" id="RHEA:44640"/>
        <dbReference type="ChEBI" id="CHEBI:30616"/>
        <dbReference type="ChEBI" id="CHEBI:61560"/>
        <dbReference type="ChEBI" id="CHEBI:73316"/>
        <dbReference type="ChEBI" id="CHEBI:456216"/>
        <dbReference type="EC" id="2.7.4.6"/>
    </reaction>
</comment>
<comment type="catalytic activity">
    <reaction evidence="1">
        <text>a ribonucleoside 5'-diphosphate + ATP = a ribonucleoside 5'-triphosphate + ADP</text>
        <dbReference type="Rhea" id="RHEA:18113"/>
        <dbReference type="ChEBI" id="CHEBI:30616"/>
        <dbReference type="ChEBI" id="CHEBI:57930"/>
        <dbReference type="ChEBI" id="CHEBI:61557"/>
        <dbReference type="ChEBI" id="CHEBI:456216"/>
        <dbReference type="EC" id="2.7.4.6"/>
    </reaction>
</comment>
<comment type="cofactor">
    <cofactor evidence="1">
        <name>Mg(2+)</name>
        <dbReference type="ChEBI" id="CHEBI:18420"/>
    </cofactor>
</comment>
<comment type="subcellular location">
    <subcellularLocation>
        <location evidence="1">Cytoplasm</location>
    </subcellularLocation>
</comment>
<comment type="similarity">
    <text evidence="1">Belongs to the NDK family.</text>
</comment>
<protein>
    <recommendedName>
        <fullName evidence="1">Nucleoside diphosphate kinase</fullName>
        <shortName evidence="1">NDK</shortName>
        <shortName evidence="1">NDP kinase</shortName>
        <ecNumber evidence="1">2.7.4.6</ecNumber>
    </recommendedName>
    <alternativeName>
        <fullName evidence="1">Nucleoside-2-P kinase</fullName>
    </alternativeName>
</protein>
<dbReference type="EC" id="2.7.4.6" evidence="1"/>
<dbReference type="EMBL" id="CP000575">
    <property type="protein sequence ID" value="ABN69929.1"/>
    <property type="molecule type" value="Genomic_DNA"/>
</dbReference>
<dbReference type="RefSeq" id="WP_011839120.1">
    <property type="nucleotide sequence ID" value="NC_009033.1"/>
</dbReference>
<dbReference type="SMR" id="A3DMR9"/>
<dbReference type="STRING" id="399550.Smar_0828"/>
<dbReference type="GeneID" id="4907470"/>
<dbReference type="KEGG" id="smr:Smar_0828"/>
<dbReference type="eggNOG" id="arCOG04313">
    <property type="taxonomic scope" value="Archaea"/>
</dbReference>
<dbReference type="HOGENOM" id="CLU_060216_6_3_2"/>
<dbReference type="OrthoDB" id="6874at2157"/>
<dbReference type="Proteomes" id="UP000000254">
    <property type="component" value="Chromosome"/>
</dbReference>
<dbReference type="GO" id="GO:0005737">
    <property type="term" value="C:cytoplasm"/>
    <property type="evidence" value="ECO:0007669"/>
    <property type="project" value="UniProtKB-SubCell"/>
</dbReference>
<dbReference type="GO" id="GO:0005524">
    <property type="term" value="F:ATP binding"/>
    <property type="evidence" value="ECO:0007669"/>
    <property type="project" value="UniProtKB-UniRule"/>
</dbReference>
<dbReference type="GO" id="GO:0046872">
    <property type="term" value="F:metal ion binding"/>
    <property type="evidence" value="ECO:0007669"/>
    <property type="project" value="UniProtKB-KW"/>
</dbReference>
<dbReference type="GO" id="GO:0004550">
    <property type="term" value="F:nucleoside diphosphate kinase activity"/>
    <property type="evidence" value="ECO:0007669"/>
    <property type="project" value="UniProtKB-UniRule"/>
</dbReference>
<dbReference type="GO" id="GO:0006241">
    <property type="term" value="P:CTP biosynthetic process"/>
    <property type="evidence" value="ECO:0007669"/>
    <property type="project" value="UniProtKB-UniRule"/>
</dbReference>
<dbReference type="GO" id="GO:0006183">
    <property type="term" value="P:GTP biosynthetic process"/>
    <property type="evidence" value="ECO:0007669"/>
    <property type="project" value="UniProtKB-UniRule"/>
</dbReference>
<dbReference type="GO" id="GO:0006228">
    <property type="term" value="P:UTP biosynthetic process"/>
    <property type="evidence" value="ECO:0007669"/>
    <property type="project" value="UniProtKB-UniRule"/>
</dbReference>
<dbReference type="CDD" id="cd04413">
    <property type="entry name" value="NDPk_I"/>
    <property type="match status" value="1"/>
</dbReference>
<dbReference type="FunFam" id="3.30.70.141:FF:000003">
    <property type="entry name" value="Nucleoside diphosphate kinase"/>
    <property type="match status" value="1"/>
</dbReference>
<dbReference type="Gene3D" id="3.30.70.141">
    <property type="entry name" value="Nucleoside diphosphate kinase-like domain"/>
    <property type="match status" value="1"/>
</dbReference>
<dbReference type="HAMAP" id="MF_00451">
    <property type="entry name" value="NDP_kinase"/>
    <property type="match status" value="1"/>
</dbReference>
<dbReference type="InterPro" id="IPR034907">
    <property type="entry name" value="NDK-like_dom"/>
</dbReference>
<dbReference type="InterPro" id="IPR036850">
    <property type="entry name" value="NDK-like_dom_sf"/>
</dbReference>
<dbReference type="InterPro" id="IPR001564">
    <property type="entry name" value="Nucleoside_diP_kinase"/>
</dbReference>
<dbReference type="InterPro" id="IPR023005">
    <property type="entry name" value="Nucleoside_diP_kinase_AS"/>
</dbReference>
<dbReference type="NCBIfam" id="NF001908">
    <property type="entry name" value="PRK00668.1"/>
    <property type="match status" value="1"/>
</dbReference>
<dbReference type="PANTHER" id="PTHR11349">
    <property type="entry name" value="NUCLEOSIDE DIPHOSPHATE KINASE"/>
    <property type="match status" value="1"/>
</dbReference>
<dbReference type="Pfam" id="PF00334">
    <property type="entry name" value="NDK"/>
    <property type="match status" value="1"/>
</dbReference>
<dbReference type="PRINTS" id="PR01243">
    <property type="entry name" value="NUCDPKINASE"/>
</dbReference>
<dbReference type="SMART" id="SM00562">
    <property type="entry name" value="NDK"/>
    <property type="match status" value="1"/>
</dbReference>
<dbReference type="SUPFAM" id="SSF54919">
    <property type="entry name" value="Nucleoside diphosphate kinase, NDK"/>
    <property type="match status" value="1"/>
</dbReference>
<dbReference type="PROSITE" id="PS00469">
    <property type="entry name" value="NDPK"/>
    <property type="match status" value="1"/>
</dbReference>
<dbReference type="PROSITE" id="PS51374">
    <property type="entry name" value="NDPK_LIKE"/>
    <property type="match status" value="1"/>
</dbReference>
<proteinExistence type="inferred from homology"/>
<gene>
    <name evidence="1" type="primary">ndk</name>
    <name type="ordered locus">Smar_0828</name>
</gene>
<sequence>MNTERTLVLIKPDGVRRGLIGEIISRFERKGLKIKALKMLRLTREKAEEFYSVHRGKPFFVSLIEFMTSGPIIAMILEGDMAISVVRRMIGPTDGREAPPGTIRGDYSLSKSQNVVHASDSPESAMREIRVIFKDDEIIDW</sequence>
<organism>
    <name type="scientific">Staphylothermus marinus (strain ATCC 43588 / DSM 3639 / JCM 9404 / F1)</name>
    <dbReference type="NCBI Taxonomy" id="399550"/>
    <lineage>
        <taxon>Archaea</taxon>
        <taxon>Thermoproteota</taxon>
        <taxon>Thermoprotei</taxon>
        <taxon>Desulfurococcales</taxon>
        <taxon>Desulfurococcaceae</taxon>
        <taxon>Staphylothermus</taxon>
    </lineage>
</organism>